<comment type="function">
    <text evidence="1">Catalyzes the CTP-dependent phosphorylation of riboflavin (vitamin B2) to form flavin mononucleotide (FMN).</text>
</comment>
<comment type="catalytic activity">
    <reaction>
        <text>riboflavin + CTP = CDP + FMN + H(+)</text>
        <dbReference type="Rhea" id="RHEA:25021"/>
        <dbReference type="ChEBI" id="CHEBI:15378"/>
        <dbReference type="ChEBI" id="CHEBI:37563"/>
        <dbReference type="ChEBI" id="CHEBI:57986"/>
        <dbReference type="ChEBI" id="CHEBI:58069"/>
        <dbReference type="ChEBI" id="CHEBI:58210"/>
        <dbReference type="EC" id="2.7.1.161"/>
    </reaction>
</comment>
<comment type="cofactor">
    <cofactor evidence="1">
        <name>Mg(2+)</name>
        <dbReference type="ChEBI" id="CHEBI:18420"/>
    </cofactor>
    <text evidence="1">Binds 1 Mg(2+) ion per subunit.</text>
</comment>
<comment type="pathway">
    <text>Cofactor biosynthesis; FMN biosynthesis; FMN from riboflavin (CTP route): step 1/1.</text>
</comment>
<comment type="similarity">
    <text evidence="2">Belongs to the archaeal riboflavin kinase family.</text>
</comment>
<proteinExistence type="inferred from homology"/>
<accession>A3MV29</accession>
<name>RIFK_PYRCJ</name>
<keyword id="KW-0285">Flavoprotein</keyword>
<keyword id="KW-0288">FMN</keyword>
<keyword id="KW-0418">Kinase</keyword>
<keyword id="KW-0460">Magnesium</keyword>
<keyword id="KW-0479">Metal-binding</keyword>
<keyword id="KW-0547">Nucleotide-binding</keyword>
<keyword id="KW-0808">Transferase</keyword>
<dbReference type="EC" id="2.7.1.161"/>
<dbReference type="EMBL" id="CP000561">
    <property type="protein sequence ID" value="ABO08496.1"/>
    <property type="molecule type" value="Genomic_DNA"/>
</dbReference>
<dbReference type="RefSeq" id="WP_011849754.1">
    <property type="nucleotide sequence ID" value="NC_009073.1"/>
</dbReference>
<dbReference type="SMR" id="A3MV29"/>
<dbReference type="STRING" id="410359.Pcal_1071"/>
<dbReference type="GeneID" id="4909736"/>
<dbReference type="KEGG" id="pcl:Pcal_1071"/>
<dbReference type="eggNOG" id="arCOG01904">
    <property type="taxonomic scope" value="Archaea"/>
</dbReference>
<dbReference type="HOGENOM" id="CLU_088476_0_0_2"/>
<dbReference type="OrthoDB" id="30955at2157"/>
<dbReference type="UniPathway" id="UPA00276">
    <property type="reaction ID" value="UER00929"/>
</dbReference>
<dbReference type="Proteomes" id="UP000001431">
    <property type="component" value="Chromosome"/>
</dbReference>
<dbReference type="GO" id="GO:0000287">
    <property type="term" value="F:magnesium ion binding"/>
    <property type="evidence" value="ECO:0007669"/>
    <property type="project" value="UniProtKB-UniRule"/>
</dbReference>
<dbReference type="GO" id="GO:0000166">
    <property type="term" value="F:nucleotide binding"/>
    <property type="evidence" value="ECO:0007669"/>
    <property type="project" value="UniProtKB-UniRule"/>
</dbReference>
<dbReference type="GO" id="GO:0008531">
    <property type="term" value="F:riboflavin kinase activity"/>
    <property type="evidence" value="ECO:0007669"/>
    <property type="project" value="InterPro"/>
</dbReference>
<dbReference type="GO" id="GO:0009398">
    <property type="term" value="P:FMN biosynthetic process"/>
    <property type="evidence" value="ECO:0007669"/>
    <property type="project" value="UniProtKB-UniRule"/>
</dbReference>
<dbReference type="GO" id="GO:0009231">
    <property type="term" value="P:riboflavin biosynthetic process"/>
    <property type="evidence" value="ECO:0007669"/>
    <property type="project" value="InterPro"/>
</dbReference>
<dbReference type="Gene3D" id="2.40.30.30">
    <property type="entry name" value="Riboflavin kinase-like"/>
    <property type="match status" value="1"/>
</dbReference>
<dbReference type="HAMAP" id="MF_01285">
    <property type="entry name" value="Riboflavin_kinase"/>
    <property type="match status" value="1"/>
</dbReference>
<dbReference type="InterPro" id="IPR039063">
    <property type="entry name" value="RibK_CTP-dep"/>
</dbReference>
<dbReference type="InterPro" id="IPR023470">
    <property type="entry name" value="Riboflavin_kinase_archaeal"/>
</dbReference>
<dbReference type="InterPro" id="IPR023602">
    <property type="entry name" value="Riboflavin_kinase_CTP-dep"/>
</dbReference>
<dbReference type="InterPro" id="IPR023465">
    <property type="entry name" value="Riboflavin_kinase_dom_sf"/>
</dbReference>
<dbReference type="InterPro" id="IPR036390">
    <property type="entry name" value="WH_DNA-bd_sf"/>
</dbReference>
<dbReference type="PANTHER" id="PTHR40706">
    <property type="entry name" value="RIBOFLAVIN KINASE"/>
    <property type="match status" value="1"/>
</dbReference>
<dbReference type="PANTHER" id="PTHR40706:SF1">
    <property type="entry name" value="RIBOFLAVIN KINASE"/>
    <property type="match status" value="1"/>
</dbReference>
<dbReference type="Pfam" id="PF01982">
    <property type="entry name" value="CTP-dep_RFKase"/>
    <property type="match status" value="1"/>
</dbReference>
<dbReference type="SUPFAM" id="SSF82114">
    <property type="entry name" value="Riboflavin kinase-like"/>
    <property type="match status" value="1"/>
</dbReference>
<dbReference type="SUPFAM" id="SSF46785">
    <property type="entry name" value="Winged helix' DNA-binding domain"/>
    <property type="match status" value="1"/>
</dbReference>
<evidence type="ECO:0000250" key="1"/>
<evidence type="ECO:0000305" key="2"/>
<protein>
    <recommendedName>
        <fullName>Riboflavin kinase</fullName>
        <shortName>RFK</shortName>
        <ecNumber>2.7.1.161</ecNumber>
    </recommendedName>
    <alternativeName>
        <fullName>CTP-dependent riboflavin kinase</fullName>
    </alternativeName>
    <alternativeName>
        <fullName>CTP:riboflavin 5'-phosphotransferase</fullName>
    </alternativeName>
    <alternativeName>
        <fullName>Flavokinase</fullName>
    </alternativeName>
</protein>
<organism>
    <name type="scientific">Pyrobaculum calidifontis (strain DSM 21063 / JCM 11548 / VA1)</name>
    <dbReference type="NCBI Taxonomy" id="410359"/>
    <lineage>
        <taxon>Archaea</taxon>
        <taxon>Thermoproteota</taxon>
        <taxon>Thermoprotei</taxon>
        <taxon>Thermoproteales</taxon>
        <taxon>Thermoproteaceae</taxon>
        <taxon>Pyrobaculum</taxon>
    </lineage>
</organism>
<gene>
    <name type="primary">ribK</name>
    <name type="ordered locus">Pcal_1071</name>
</gene>
<feature type="chain" id="PRO_0000322101" description="Riboflavin kinase">
    <location>
        <begin position="1"/>
        <end position="212"/>
    </location>
</feature>
<feature type="region of interest" description="Unknown">
    <location>
        <begin position="1"/>
        <end position="83"/>
    </location>
</feature>
<feature type="region of interest" description="Riboflavin kinase">
    <location>
        <begin position="84"/>
        <end position="212"/>
    </location>
</feature>
<feature type="binding site" evidence="1">
    <location>
        <begin position="93"/>
        <end position="98"/>
    </location>
    <ligand>
        <name>CDP</name>
        <dbReference type="ChEBI" id="CHEBI:58069"/>
    </ligand>
</feature>
<feature type="binding site" evidence="1">
    <location>
        <position position="122"/>
    </location>
    <ligand>
        <name>Mg(2+)</name>
        <dbReference type="ChEBI" id="CHEBI:18420"/>
    </ligand>
</feature>
<feature type="binding site" evidence="1">
    <location>
        <position position="124"/>
    </location>
    <ligand>
        <name>Mg(2+)</name>
        <dbReference type="ChEBI" id="CHEBI:18420"/>
    </ligand>
</feature>
<feature type="binding site" evidence="1">
    <location>
        <position position="179"/>
    </location>
    <ligand>
        <name>FMN</name>
        <dbReference type="ChEBI" id="CHEBI:58210"/>
    </ligand>
</feature>
<feature type="binding site" evidence="1">
    <location>
        <position position="187"/>
    </location>
    <ligand>
        <name>FMN</name>
        <dbReference type="ChEBI" id="CHEBI:58210"/>
    </ligand>
</feature>
<feature type="binding site" evidence="1">
    <location>
        <begin position="192"/>
        <end position="195"/>
    </location>
    <ligand>
        <name>CDP</name>
        <dbReference type="ChEBI" id="CHEBI:58069"/>
    </ligand>
</feature>
<reference key="1">
    <citation type="submission" date="2007-02" db="EMBL/GenBank/DDBJ databases">
        <title>Complete sequence of Pyrobaculum calidifontis JCM 11548.</title>
        <authorList>
            <consortium name="US DOE Joint Genome Institute"/>
            <person name="Copeland A."/>
            <person name="Lucas S."/>
            <person name="Lapidus A."/>
            <person name="Barry K."/>
            <person name="Glavina del Rio T."/>
            <person name="Dalin E."/>
            <person name="Tice H."/>
            <person name="Pitluck S."/>
            <person name="Chain P."/>
            <person name="Malfatti S."/>
            <person name="Shin M."/>
            <person name="Vergez L."/>
            <person name="Schmutz J."/>
            <person name="Larimer F."/>
            <person name="Land M."/>
            <person name="Hauser L."/>
            <person name="Kyrpides N."/>
            <person name="Mikhailova N."/>
            <person name="Cozen A.E."/>
            <person name="Fitz-Gibbon S.T."/>
            <person name="House C.H."/>
            <person name="Saltikov C."/>
            <person name="Lowe T.M."/>
            <person name="Richardson P."/>
        </authorList>
    </citation>
    <scope>NUCLEOTIDE SEQUENCE [LARGE SCALE GENOMIC DNA]</scope>
    <source>
        <strain>DSM 21063 / JCM 11548 / VA1</strain>
    </source>
</reference>
<sequence length="212" mass="23505">MTELYCERKTLADLIAFASVEGLPVGEAAKRLCMSRQGAYKAVKALREAGYLSEGPVIKLTQKGRDALSIVLRNLLRYFDIASIKLVGRVVTGLGEGAFYMSLEGYRRAIERELGFTPYPGTLNIKLEPQSLAHRRYLDGLPGIHIPGFTNGMRTYGAVKAFRARLADVEGAVVMPERTHHPVDVIEFIAPVRVRDVLGLKDGDRVELEVYL</sequence>